<dbReference type="EC" id="4.1.1.112" evidence="1"/>
<dbReference type="EMBL" id="FM209186">
    <property type="protein sequence ID" value="CAW30012.1"/>
    <property type="molecule type" value="Genomic_DNA"/>
</dbReference>
<dbReference type="RefSeq" id="WP_003121125.1">
    <property type="nucleotide sequence ID" value="NC_011770.1"/>
</dbReference>
<dbReference type="SMR" id="B7V1T5"/>
<dbReference type="KEGG" id="pag:PLES_52581"/>
<dbReference type="HOGENOM" id="CLU_027389_3_2_6"/>
<dbReference type="GO" id="GO:0000287">
    <property type="term" value="F:magnesium ion binding"/>
    <property type="evidence" value="ECO:0007669"/>
    <property type="project" value="UniProtKB-UniRule"/>
</dbReference>
<dbReference type="GO" id="GO:0046421">
    <property type="term" value="F:methylisocitrate lyase activity"/>
    <property type="evidence" value="ECO:0007669"/>
    <property type="project" value="TreeGrafter"/>
</dbReference>
<dbReference type="GO" id="GO:0008948">
    <property type="term" value="F:oxaloacetate decarboxylase activity"/>
    <property type="evidence" value="ECO:0007669"/>
    <property type="project" value="UniProtKB-UniRule"/>
</dbReference>
<dbReference type="GO" id="GO:0006107">
    <property type="term" value="P:oxaloacetate metabolic process"/>
    <property type="evidence" value="ECO:0007669"/>
    <property type="project" value="UniProtKB-UniRule"/>
</dbReference>
<dbReference type="GO" id="GO:0019629">
    <property type="term" value="P:propionate catabolic process, 2-methylcitrate cycle"/>
    <property type="evidence" value="ECO:0007669"/>
    <property type="project" value="TreeGrafter"/>
</dbReference>
<dbReference type="GO" id="GO:0042866">
    <property type="term" value="P:pyruvate biosynthetic process"/>
    <property type="evidence" value="ECO:0007669"/>
    <property type="project" value="UniProtKB-UniRule"/>
</dbReference>
<dbReference type="CDD" id="cd00377">
    <property type="entry name" value="ICL_PEPM"/>
    <property type="match status" value="1"/>
</dbReference>
<dbReference type="FunFam" id="3.20.20.60:FF:000015">
    <property type="entry name" value="Oxaloacetate decarboxylase"/>
    <property type="match status" value="1"/>
</dbReference>
<dbReference type="Gene3D" id="3.20.20.60">
    <property type="entry name" value="Phosphoenolpyruvate-binding domains"/>
    <property type="match status" value="1"/>
</dbReference>
<dbReference type="HAMAP" id="MF_01299">
    <property type="entry name" value="OadC"/>
    <property type="match status" value="1"/>
</dbReference>
<dbReference type="InterPro" id="IPR039556">
    <property type="entry name" value="ICL/PEPM"/>
</dbReference>
<dbReference type="InterPro" id="IPR023687">
    <property type="entry name" value="Oxaloacetate_deCOase_bac"/>
</dbReference>
<dbReference type="InterPro" id="IPR015813">
    <property type="entry name" value="Pyrv/PenolPyrv_kinase-like_dom"/>
</dbReference>
<dbReference type="InterPro" id="IPR040442">
    <property type="entry name" value="Pyrv_kinase-like_dom_sf"/>
</dbReference>
<dbReference type="PANTHER" id="PTHR42905:SF3">
    <property type="entry name" value="OXALOACETATE DECARBOXYLASE"/>
    <property type="match status" value="1"/>
</dbReference>
<dbReference type="PANTHER" id="PTHR42905">
    <property type="entry name" value="PHOSPHOENOLPYRUVATE CARBOXYLASE"/>
    <property type="match status" value="1"/>
</dbReference>
<dbReference type="Pfam" id="PF13714">
    <property type="entry name" value="PEP_mutase"/>
    <property type="match status" value="1"/>
</dbReference>
<dbReference type="SUPFAM" id="SSF51621">
    <property type="entry name" value="Phosphoenolpyruvate/pyruvate domain"/>
    <property type="match status" value="1"/>
</dbReference>
<proteinExistence type="inferred from homology"/>
<gene>
    <name type="ordered locus">PLES_52581</name>
</gene>
<sequence length="287" mass="31321">MHRASHHELRAMFRALLDSSRCYHTASVFDPMSARIAADLGFECGILGGSVASLQVLAAPDFALITLSEFVEQATRIGRVARLPVIADADHGYGNALNVMRTVVELERAGIAALTIEDTLLPAQFGRKSTDLICVEEGVGKIRAALEARVDPALTIIARTNAELIDVDAVIQRTLAYQEAGADGICLVGVRDFAHLEAIAEHLHIPLMLVTYGNPQLRDDARLARLGVRVVVNGHAAYFAAIKATYDCLREERGAVASDLTASELSKKYTFPEEYQAWARDYMEVKE</sequence>
<organism>
    <name type="scientific">Pseudomonas aeruginosa (strain LESB58)</name>
    <dbReference type="NCBI Taxonomy" id="557722"/>
    <lineage>
        <taxon>Bacteria</taxon>
        <taxon>Pseudomonadati</taxon>
        <taxon>Pseudomonadota</taxon>
        <taxon>Gammaproteobacteria</taxon>
        <taxon>Pseudomonadales</taxon>
        <taxon>Pseudomonadaceae</taxon>
        <taxon>Pseudomonas</taxon>
    </lineage>
</organism>
<name>OADC_PSEA8</name>
<evidence type="ECO:0000255" key="1">
    <source>
        <dbReference type="HAMAP-Rule" id="MF_01299"/>
    </source>
</evidence>
<reference key="1">
    <citation type="journal article" date="2009" name="Genome Res.">
        <title>Newly introduced genomic prophage islands are critical determinants of in vivo competitiveness in the Liverpool epidemic strain of Pseudomonas aeruginosa.</title>
        <authorList>
            <person name="Winstanley C."/>
            <person name="Langille M.G.I."/>
            <person name="Fothergill J.L."/>
            <person name="Kukavica-Ibrulj I."/>
            <person name="Paradis-Bleau C."/>
            <person name="Sanschagrin F."/>
            <person name="Thomson N.R."/>
            <person name="Winsor G.L."/>
            <person name="Quail M.A."/>
            <person name="Lennard N."/>
            <person name="Bignell A."/>
            <person name="Clarke L."/>
            <person name="Seeger K."/>
            <person name="Saunders D."/>
            <person name="Harris D."/>
            <person name="Parkhill J."/>
            <person name="Hancock R.E.W."/>
            <person name="Brinkman F.S.L."/>
            <person name="Levesque R.C."/>
        </authorList>
    </citation>
    <scope>NUCLEOTIDE SEQUENCE [LARGE SCALE GENOMIC DNA]</scope>
    <source>
        <strain>LESB58</strain>
    </source>
</reference>
<feature type="chain" id="PRO_1000140442" description="Oxaloacetate decarboxylase">
    <location>
        <begin position="1"/>
        <end position="287"/>
    </location>
</feature>
<feature type="binding site" evidence="1">
    <location>
        <position position="50"/>
    </location>
    <ligand>
        <name>substrate</name>
    </ligand>
</feature>
<feature type="binding site" evidence="1">
    <location>
        <position position="88"/>
    </location>
    <ligand>
        <name>Mg(2+)</name>
        <dbReference type="ChEBI" id="CHEBI:18420"/>
    </ligand>
</feature>
<feature type="binding site" evidence="1">
    <location>
        <position position="159"/>
    </location>
    <ligand>
        <name>substrate</name>
    </ligand>
</feature>
<feature type="binding site" evidence="1">
    <location>
        <position position="235"/>
    </location>
    <ligand>
        <name>substrate</name>
    </ligand>
</feature>
<protein>
    <recommendedName>
        <fullName evidence="1">Oxaloacetate decarboxylase</fullName>
        <ecNumber evidence="1">4.1.1.112</ecNumber>
    </recommendedName>
</protein>
<accession>B7V1T5</accession>
<keyword id="KW-0210">Decarboxylase</keyword>
<keyword id="KW-0456">Lyase</keyword>
<keyword id="KW-0460">Magnesium</keyword>
<keyword id="KW-0479">Metal-binding</keyword>
<comment type="function">
    <text evidence="1">Catalyzes the decarboxylation of oxaloacetate into pyruvate. Seems to play a role in maintaining cellular concentrations of bicarbonate and pyruvate.</text>
</comment>
<comment type="catalytic activity">
    <reaction evidence="1">
        <text>oxaloacetate + H(+) = pyruvate + CO2</text>
        <dbReference type="Rhea" id="RHEA:15641"/>
        <dbReference type="ChEBI" id="CHEBI:15361"/>
        <dbReference type="ChEBI" id="CHEBI:15378"/>
        <dbReference type="ChEBI" id="CHEBI:16452"/>
        <dbReference type="ChEBI" id="CHEBI:16526"/>
        <dbReference type="EC" id="4.1.1.112"/>
    </reaction>
</comment>
<comment type="cofactor">
    <cofactor evidence="1">
        <name>Mg(2+)</name>
        <dbReference type="ChEBI" id="CHEBI:18420"/>
    </cofactor>
    <text evidence="1">Binds 1 Mg(2+) ion per subunit.</text>
</comment>
<comment type="subunit">
    <text evidence="1">Homotetramer; dimer of dimers.</text>
</comment>
<comment type="similarity">
    <text evidence="1">Belongs to the isocitrate lyase family. Oxaloacetate decarboxylase subfamily.</text>
</comment>